<accession>O55716</accession>
<sequence>MSDIIIDLSRDSKFDELGLKRLRESYMMREETSPQERFAYVCKQVGTDRDHSQRLYEYTSKHWLSLSTPILSFGKANHGLPISCYLSWIEDTKEGLIDTLSEVNQLSMLGGGVGVGVGIRTSDNKSTGVMSHLNTYDACSLAYKQDGVRRGSYAMYLNNNHPDVLQFIEMRKPTGDHNIRCLNLHHGLNISDEFMELIEKCDGGGNIDDTWNLIDPHTKKITTVGARDLWQRILETRMKTGEPYICFIDTCNKHMYDFQKKKGLTIKQSNLCVAPETMILTEDGQFPIKDLEGKIIKVWNGNEFSSVTVVKTGTEKELLEVELSNGCTLSCTPEHKFIIVKSYTEAKKQKTDDNAIANAERVDAQDLKPRMKLIKFDLPTLFGNSEHDIKYPYTHGFFCGDGTYTKYGKPQLSLYGDKKELLTYLDVRTMTGLEDASGRLNTWLPLDLAPKFDVPINSSLECRMEWLAGYLDADGCVFRNGTNESIQVSCIHLDFLKRIQLLLIGMGVTSKITKLHDEKITTMPDGKGGQKPYSCKPIWRLFISSSGLYHLSEQGFETRRLKWEPRQPQRNAERFVEVLKVNKTGRVDDTYCFTEPINHAGVFNGILTGQCSEIILPTDSTRTAVCCLSSLNLEYYDEWKDNDLFIKDVMEMLDNALTIFIEKAPPTISRAVNSAKKERSIGIGVLGFHSFLQQKNISFESDEAAKLNIDIFTKLRSKIDTFNLVLGSLRGSPEDAEGTGRRFCCTMAVAPTATSSIIMGNTSPSVEPFRANAYRQDTLSGSFLNKNRYLSRILSQRLNVKEINEVWSNIVSNGGSVQQLPNNLLSEQEKQVFKTAFEINQKWVIKHAADRQKYIDQSQSINLFLKPDIHKRELHSLHLNAWKSGLKTLYYLRSEKIADADKISSNHMINSINFTNIKESIKDSIKVSILEVRNKEKNYEEKICKLTNGRRLSGCFACE</sequence>
<protein>
    <recommendedName>
        <fullName>Ribonucleoside-diphosphate reductase large subunit</fullName>
        <ecNumber>1.17.4.1</ecNumber>
    </recommendedName>
    <alternativeName>
        <fullName>Ribonucleotide reductase large subunit</fullName>
    </alternativeName>
    <component>
        <recommendedName>
            <fullName>IIV-6 RIR1 intein</fullName>
        </recommendedName>
    </component>
</protein>
<organismHost>
    <name type="scientific">Acheta domesticus</name>
    <name type="common">House cricket</name>
    <dbReference type="NCBI Taxonomy" id="6997"/>
</organismHost>
<organismHost>
    <name type="scientific">Chilo suppressalis</name>
    <name type="common">Asiatic rice borer moth</name>
    <dbReference type="NCBI Taxonomy" id="168631"/>
</organismHost>
<organismHost>
    <name type="scientific">Gryllus bimaculatus</name>
    <name type="common">Two-spotted cricket</name>
    <dbReference type="NCBI Taxonomy" id="6999"/>
</organismHost>
<organismHost>
    <name type="scientific">Gryllus campestris</name>
    <dbReference type="NCBI Taxonomy" id="58607"/>
</organismHost>
<organismHost>
    <name type="scientific">Spodoptera frugiperda</name>
    <name type="common">Fall armyworm</name>
    <dbReference type="NCBI Taxonomy" id="7108"/>
</organismHost>
<evidence type="ECO:0000250" key="1"/>
<evidence type="ECO:0000255" key="2"/>
<evidence type="ECO:0000255" key="3">
    <source>
        <dbReference type="PROSITE-ProRule" id="PRU00273"/>
    </source>
</evidence>
<evidence type="ECO:0000305" key="4"/>
<feature type="chain" id="PRO_0000376951" description="Ribonucleoside-diphosphate reductase large subunit, 1st part">
    <location>
        <begin position="1"/>
        <end position="271"/>
    </location>
</feature>
<feature type="chain" id="PRO_0000376952" description="IIV-6 RIR1 intein" evidence="2">
    <location>
        <begin position="272"/>
        <end position="611"/>
    </location>
</feature>
<feature type="chain" id="PRO_0000377536" description="Ribonucleoside-diphosphate reductase large subunit, 2nd part">
    <location>
        <begin position="612"/>
        <end position="959"/>
    </location>
</feature>
<feature type="domain" description="DOD-type homing endonuclease" evidence="3">
    <location>
        <begin position="378"/>
        <end position="508"/>
    </location>
</feature>
<feature type="active site" description="Proton acceptor" evidence="1">
    <location>
        <position position="270"/>
    </location>
</feature>
<feature type="active site" description="Cysteine radical intermediate" evidence="1">
    <location>
        <position position="611"/>
    </location>
</feature>
<feature type="active site" description="Proton acceptor" evidence="1">
    <location>
        <position position="613"/>
    </location>
</feature>
<feature type="binding site" evidence="1">
    <location>
        <position position="68"/>
    </location>
    <ligand>
        <name>substrate</name>
    </ligand>
</feature>
<feature type="binding site" evidence="1">
    <location>
        <begin position="83"/>
        <end position="84"/>
    </location>
    <ligand>
        <name>substrate</name>
    </ligand>
</feature>
<feature type="binding site" evidence="1">
    <location>
        <position position="112"/>
    </location>
    <ligand>
        <name>substrate</name>
    </ligand>
</feature>
<feature type="binding site" evidence="1">
    <location>
        <begin position="751"/>
        <end position="755"/>
    </location>
    <ligand>
        <name>substrate</name>
    </ligand>
</feature>
<feature type="site" description="Important for hydrogen atom transfer" evidence="1">
    <location>
        <position position="84"/>
    </location>
</feature>
<feature type="site" description="Allosteric effector binding" evidence="1">
    <location>
        <position position="91"/>
    </location>
</feature>
<feature type="site" description="Allosteric effector binding" evidence="1">
    <location>
        <position position="120"/>
    </location>
</feature>
<feature type="site" description="Important for hydrogen atom transfer" evidence="1">
    <location>
        <position position="626"/>
    </location>
</feature>
<feature type="site" description="Important for electron transfer" evidence="1">
    <location>
        <position position="890"/>
    </location>
</feature>
<feature type="site" description="Important for electron transfer" evidence="1">
    <location>
        <position position="891"/>
    </location>
</feature>
<feature type="site" description="Interacts with thioredoxin/glutaredoxin" evidence="1">
    <location>
        <position position="955"/>
    </location>
</feature>
<feature type="site" description="Interacts with thioredoxin/glutaredoxin" evidence="1">
    <location>
        <position position="958"/>
    </location>
</feature>
<feature type="disulfide bond" description="Redox-active" evidence="1">
    <location>
        <begin position="84"/>
        <end position="626"/>
    </location>
</feature>
<dbReference type="EC" id="1.17.4.1"/>
<dbReference type="EMBL" id="AF303741">
    <property type="protein sequence ID" value="AAB94427.1"/>
    <property type="molecule type" value="Genomic_DNA"/>
</dbReference>
<dbReference type="PIR" id="T03053">
    <property type="entry name" value="T03053"/>
</dbReference>
<dbReference type="RefSeq" id="NP_149548.1">
    <property type="nucleotide sequence ID" value="NC_003038.1"/>
</dbReference>
<dbReference type="KEGG" id="vg:1733256"/>
<dbReference type="OrthoDB" id="2980at10239"/>
<dbReference type="Proteomes" id="UP000001359">
    <property type="component" value="Genome"/>
</dbReference>
<dbReference type="GO" id="GO:0005524">
    <property type="term" value="F:ATP binding"/>
    <property type="evidence" value="ECO:0007669"/>
    <property type="project" value="InterPro"/>
</dbReference>
<dbReference type="GO" id="GO:0004519">
    <property type="term" value="F:endonuclease activity"/>
    <property type="evidence" value="ECO:0007669"/>
    <property type="project" value="InterPro"/>
</dbReference>
<dbReference type="GO" id="GO:0004748">
    <property type="term" value="F:ribonucleoside-diphosphate reductase activity, thioredoxin disulfide as acceptor"/>
    <property type="evidence" value="ECO:0007669"/>
    <property type="project" value="UniProtKB-EC"/>
</dbReference>
<dbReference type="GO" id="GO:0009263">
    <property type="term" value="P:deoxyribonucleotide biosynthetic process"/>
    <property type="evidence" value="ECO:0007669"/>
    <property type="project" value="UniProtKB-KW"/>
</dbReference>
<dbReference type="GO" id="GO:0016539">
    <property type="term" value="P:intein-mediated protein splicing"/>
    <property type="evidence" value="ECO:0007669"/>
    <property type="project" value="InterPro"/>
</dbReference>
<dbReference type="CDD" id="cd00081">
    <property type="entry name" value="Hint"/>
    <property type="match status" value="1"/>
</dbReference>
<dbReference type="Gene3D" id="3.20.70.20">
    <property type="match status" value="2"/>
</dbReference>
<dbReference type="Gene3D" id="3.10.28.10">
    <property type="entry name" value="Homing endonucleases"/>
    <property type="match status" value="1"/>
</dbReference>
<dbReference type="InterPro" id="IPR003586">
    <property type="entry name" value="Hint_dom_C"/>
</dbReference>
<dbReference type="InterPro" id="IPR003587">
    <property type="entry name" value="Hint_dom_N"/>
</dbReference>
<dbReference type="InterPro" id="IPR036844">
    <property type="entry name" value="Hint_dom_sf"/>
</dbReference>
<dbReference type="InterPro" id="IPR027434">
    <property type="entry name" value="Homing_endonucl"/>
</dbReference>
<dbReference type="InterPro" id="IPR006142">
    <property type="entry name" value="INTEIN"/>
</dbReference>
<dbReference type="InterPro" id="IPR004042">
    <property type="entry name" value="Intein_endonuc_central"/>
</dbReference>
<dbReference type="InterPro" id="IPR006141">
    <property type="entry name" value="Intein_N"/>
</dbReference>
<dbReference type="InterPro" id="IPR004860">
    <property type="entry name" value="LAGLIDADG_dom"/>
</dbReference>
<dbReference type="InterPro" id="IPR000788">
    <property type="entry name" value="RNR_lg_C"/>
</dbReference>
<dbReference type="InterPro" id="IPR013509">
    <property type="entry name" value="RNR_lsu_N"/>
</dbReference>
<dbReference type="InterPro" id="IPR008926">
    <property type="entry name" value="RNR_R1-su_N"/>
</dbReference>
<dbReference type="InterPro" id="IPR039718">
    <property type="entry name" value="Rrm1"/>
</dbReference>
<dbReference type="NCBIfam" id="TIGR01445">
    <property type="entry name" value="intein_Nterm"/>
    <property type="match status" value="1"/>
</dbReference>
<dbReference type="PANTHER" id="PTHR11573">
    <property type="entry name" value="RIBONUCLEOSIDE-DIPHOSPHATE REDUCTASE LARGE CHAIN"/>
    <property type="match status" value="1"/>
</dbReference>
<dbReference type="PANTHER" id="PTHR11573:SF6">
    <property type="entry name" value="RIBONUCLEOSIDE-DIPHOSPHATE REDUCTASE LARGE SUBUNIT"/>
    <property type="match status" value="1"/>
</dbReference>
<dbReference type="Pfam" id="PF14528">
    <property type="entry name" value="LAGLIDADG_3"/>
    <property type="match status" value="1"/>
</dbReference>
<dbReference type="Pfam" id="PF02867">
    <property type="entry name" value="Ribonuc_red_lgC"/>
    <property type="match status" value="2"/>
</dbReference>
<dbReference type="Pfam" id="PF00317">
    <property type="entry name" value="Ribonuc_red_lgN"/>
    <property type="match status" value="1"/>
</dbReference>
<dbReference type="PRINTS" id="PR00379">
    <property type="entry name" value="INTEIN"/>
</dbReference>
<dbReference type="SMART" id="SM00305">
    <property type="entry name" value="HintC"/>
    <property type="match status" value="1"/>
</dbReference>
<dbReference type="SMART" id="SM00306">
    <property type="entry name" value="HintN"/>
    <property type="match status" value="1"/>
</dbReference>
<dbReference type="SUPFAM" id="SSF51294">
    <property type="entry name" value="Hedgehog/intein (Hint) domain"/>
    <property type="match status" value="1"/>
</dbReference>
<dbReference type="SUPFAM" id="SSF55608">
    <property type="entry name" value="Homing endonucleases"/>
    <property type="match status" value="1"/>
</dbReference>
<dbReference type="SUPFAM" id="SSF51998">
    <property type="entry name" value="PFL-like glycyl radical enzymes"/>
    <property type="match status" value="1"/>
</dbReference>
<dbReference type="SUPFAM" id="SSF48168">
    <property type="entry name" value="R1 subunit of ribonucleotide reductase, N-terminal domain"/>
    <property type="match status" value="1"/>
</dbReference>
<dbReference type="PROSITE" id="PS50819">
    <property type="entry name" value="INTEIN_ENDONUCLEASE"/>
    <property type="match status" value="1"/>
</dbReference>
<dbReference type="PROSITE" id="PS50817">
    <property type="entry name" value="INTEIN_N_TER"/>
    <property type="match status" value="1"/>
</dbReference>
<organism>
    <name type="scientific">Invertebrate iridescent virus 6</name>
    <name type="common">IIV-6</name>
    <name type="synonym">Chilo iridescent virus</name>
    <dbReference type="NCBI Taxonomy" id="176652"/>
    <lineage>
        <taxon>Viruses</taxon>
        <taxon>Varidnaviria</taxon>
        <taxon>Bamfordvirae</taxon>
        <taxon>Nucleocytoviricota</taxon>
        <taxon>Megaviricetes</taxon>
        <taxon>Pimascovirales</taxon>
        <taxon>Iridoviridae</taxon>
        <taxon>Betairidovirinae</taxon>
        <taxon>Iridovirus</taxon>
    </lineage>
</organism>
<gene>
    <name type="ORF">IIV6-085L</name>
</gene>
<reference key="1">
    <citation type="journal article" date="2001" name="Virology">
        <title>Analysis of the first complete DNA sequence of an invertebrate iridovirus: coding strategy of the genome of Chilo iridescent virus.</title>
        <authorList>
            <person name="Jakob N.J."/>
            <person name="Mueller K."/>
            <person name="Bahr U."/>
            <person name="Darai G."/>
        </authorList>
    </citation>
    <scope>NUCLEOTIDE SEQUENCE [LARGE SCALE GENOMIC DNA]</scope>
</reference>
<reference key="2">
    <citation type="journal article" date="2007" name="Virol. J.">
        <title>Comparative genomic analysis of the family Iridoviridae: re-annotating and defining the core set of iridovirus genes.</title>
        <authorList>
            <person name="Eaton H.E."/>
            <person name="Metcalf J."/>
            <person name="Penny E."/>
            <person name="Tcherepanov V."/>
            <person name="Upton C."/>
            <person name="Brunetti C.R."/>
        </authorList>
    </citation>
    <scope>GENOME REANNOTATION</scope>
</reference>
<name>RIR1_IIV6</name>
<keyword id="KW-0068">Autocatalytic cleavage</keyword>
<keyword id="KW-0215">Deoxyribonucleotide synthesis</keyword>
<keyword id="KW-1015">Disulfide bond</keyword>
<keyword id="KW-0560">Oxidoreductase</keyword>
<keyword id="KW-0651">Protein splicing</keyword>
<keyword id="KW-1185">Reference proteome</keyword>
<proteinExistence type="inferred from homology"/>
<comment type="function">
    <text evidence="1">Ribonucleoside-diphosphate reductase holoenzyme provides the precursors necessary for viral DNA synthesis. Allows virus growth in non-dividing cells. Catalyzes the biosynthesis of deoxyribonucleotides from the corresponding ribonucleotides (By similarity).</text>
</comment>
<comment type="catalytic activity">
    <reaction>
        <text>a 2'-deoxyribonucleoside 5'-diphosphate + [thioredoxin]-disulfide + H2O = a ribonucleoside 5'-diphosphate + [thioredoxin]-dithiol</text>
        <dbReference type="Rhea" id="RHEA:23252"/>
        <dbReference type="Rhea" id="RHEA-COMP:10698"/>
        <dbReference type="Rhea" id="RHEA-COMP:10700"/>
        <dbReference type="ChEBI" id="CHEBI:15377"/>
        <dbReference type="ChEBI" id="CHEBI:29950"/>
        <dbReference type="ChEBI" id="CHEBI:50058"/>
        <dbReference type="ChEBI" id="CHEBI:57930"/>
        <dbReference type="ChEBI" id="CHEBI:73316"/>
        <dbReference type="EC" id="1.17.4.1"/>
    </reaction>
</comment>
<comment type="activity regulation">
    <text evidence="1">Under complex allosteric control mediated by deoxynucleoside triphosphates and ATP binding. The type of nucleotide bound at the specificity site determines substrate preference. It seems probable that ATP makes the enzyme reduce CDP and UDP, dGTP favors ADP reduction and dTTP favors GDP reduction (By similarity).</text>
</comment>
<comment type="subunit">
    <text evidence="1">Heterotetramer composed of a homodimer of the large subunit (R1) and a homodimer of the small subunit (R2). Larger multisubunit protein complex are also active, composed of (R1)n(R2)n (By similarity).</text>
</comment>
<comment type="similarity">
    <text evidence="4">Belongs to the ribonucleoside diphosphate reductase large chain family.</text>
</comment>